<comment type="function">
    <text evidence="1">Plays an essential role in the initiation and regulation of chromosomal replication. ATP-DnaA binds to the origin of replication (oriC) to initiate formation of the DNA replication initiation complex once per cell cycle. Binds the DnaA box (a 9 base pair repeat at the origin) and separates the double-stranded (ds)DNA. Forms a right-handed helical filament on oriC DNA; dsDNA binds to the exterior of the filament while single-stranded (ss)DNA is stabiized in the filament's interior. The ATP-DnaA-oriC complex binds and stabilizes one strand of the AT-rich DNA unwinding element (DUE), permitting loading of DNA polymerase. After initiation quickly degrades to an ADP-DnaA complex that is not apt for DNA replication. Binds acidic phospholipids.</text>
</comment>
<comment type="subunit">
    <text evidence="1">Oligomerizes as a right-handed, spiral filament on DNA at oriC.</text>
</comment>
<comment type="subcellular location">
    <subcellularLocation>
        <location evidence="1">Cytoplasm</location>
    </subcellularLocation>
</comment>
<comment type="domain">
    <text evidence="1">Domain I is involved in oligomerization and binding regulators, domain II is flexibile and of varying length in different bacteria, domain III forms the AAA+ region, while domain IV binds dsDNA.</text>
</comment>
<comment type="similarity">
    <text evidence="1">Belongs to the DnaA family.</text>
</comment>
<evidence type="ECO:0000255" key="1">
    <source>
        <dbReference type="HAMAP-Rule" id="MF_00377"/>
    </source>
</evidence>
<feature type="chain" id="PRO_0000114153" description="Chromosomal replication initiator protein DnaA">
    <location>
        <begin position="1"/>
        <end position="440"/>
    </location>
</feature>
<feature type="region of interest" description="Domain I, interacts with DnaA modulators" evidence="1">
    <location>
        <begin position="1"/>
        <end position="74"/>
    </location>
</feature>
<feature type="region of interest" description="Domain II" evidence="1">
    <location>
        <begin position="74"/>
        <end position="99"/>
    </location>
</feature>
<feature type="region of interest" description="Domain III, AAA+ region" evidence="1">
    <location>
        <begin position="100"/>
        <end position="316"/>
    </location>
</feature>
<feature type="region of interest" description="Domain IV, binds dsDNA" evidence="1">
    <location>
        <begin position="317"/>
        <end position="440"/>
    </location>
</feature>
<feature type="binding site" evidence="1">
    <location>
        <position position="146"/>
    </location>
    <ligand>
        <name>ATP</name>
        <dbReference type="ChEBI" id="CHEBI:30616"/>
    </ligand>
</feature>
<feature type="binding site" evidence="1">
    <location>
        <position position="148"/>
    </location>
    <ligand>
        <name>ATP</name>
        <dbReference type="ChEBI" id="CHEBI:30616"/>
    </ligand>
</feature>
<feature type="binding site" evidence="1">
    <location>
        <position position="149"/>
    </location>
    <ligand>
        <name>ATP</name>
        <dbReference type="ChEBI" id="CHEBI:30616"/>
    </ligand>
</feature>
<feature type="binding site" evidence="1">
    <location>
        <position position="150"/>
    </location>
    <ligand>
        <name>ATP</name>
        <dbReference type="ChEBI" id="CHEBI:30616"/>
    </ligand>
</feature>
<organism>
    <name type="scientific">Campylobacter jejuni (strain RM1221)</name>
    <dbReference type="NCBI Taxonomy" id="195099"/>
    <lineage>
        <taxon>Bacteria</taxon>
        <taxon>Pseudomonadati</taxon>
        <taxon>Campylobacterota</taxon>
        <taxon>Epsilonproteobacteria</taxon>
        <taxon>Campylobacterales</taxon>
        <taxon>Campylobacteraceae</taxon>
        <taxon>Campylobacter</taxon>
    </lineage>
</organism>
<reference key="1">
    <citation type="journal article" date="2005" name="PLoS Biol.">
        <title>Major structural differences and novel potential virulence mechanisms from the genomes of multiple Campylobacter species.</title>
        <authorList>
            <person name="Fouts D.E."/>
            <person name="Mongodin E.F."/>
            <person name="Mandrell R.E."/>
            <person name="Miller W.G."/>
            <person name="Rasko D.A."/>
            <person name="Ravel J."/>
            <person name="Brinkac L.M."/>
            <person name="DeBoy R.T."/>
            <person name="Parker C.T."/>
            <person name="Daugherty S.C."/>
            <person name="Dodson R.J."/>
            <person name="Durkin A.S."/>
            <person name="Madupu R."/>
            <person name="Sullivan S.A."/>
            <person name="Shetty J.U."/>
            <person name="Ayodeji M.A."/>
            <person name="Shvartsbeyn A."/>
            <person name="Schatz M.C."/>
            <person name="Badger J.H."/>
            <person name="Fraser C.M."/>
            <person name="Nelson K.E."/>
        </authorList>
    </citation>
    <scope>NUCLEOTIDE SEQUENCE [LARGE SCALE GENOMIC DNA]</scope>
    <source>
        <strain>RM1221</strain>
    </source>
</reference>
<keyword id="KW-0067">ATP-binding</keyword>
<keyword id="KW-0963">Cytoplasm</keyword>
<keyword id="KW-0235">DNA replication</keyword>
<keyword id="KW-0238">DNA-binding</keyword>
<keyword id="KW-0446">Lipid-binding</keyword>
<keyword id="KW-0547">Nucleotide-binding</keyword>
<accession>Q5HXF5</accession>
<dbReference type="EMBL" id="CP000025">
    <property type="protein sequence ID" value="AAW34498.1"/>
    <property type="molecule type" value="Genomic_DNA"/>
</dbReference>
<dbReference type="RefSeq" id="WP_002876079.1">
    <property type="nucleotide sequence ID" value="NC_003912.7"/>
</dbReference>
<dbReference type="SMR" id="Q5HXF5"/>
<dbReference type="KEGG" id="cjr:CJE0001"/>
<dbReference type="HOGENOM" id="CLU_026910_3_1_7"/>
<dbReference type="GO" id="GO:0005737">
    <property type="term" value="C:cytoplasm"/>
    <property type="evidence" value="ECO:0007669"/>
    <property type="project" value="UniProtKB-SubCell"/>
</dbReference>
<dbReference type="GO" id="GO:0005886">
    <property type="term" value="C:plasma membrane"/>
    <property type="evidence" value="ECO:0007669"/>
    <property type="project" value="TreeGrafter"/>
</dbReference>
<dbReference type="GO" id="GO:0005524">
    <property type="term" value="F:ATP binding"/>
    <property type="evidence" value="ECO:0007669"/>
    <property type="project" value="UniProtKB-UniRule"/>
</dbReference>
<dbReference type="GO" id="GO:0016887">
    <property type="term" value="F:ATP hydrolysis activity"/>
    <property type="evidence" value="ECO:0007669"/>
    <property type="project" value="InterPro"/>
</dbReference>
<dbReference type="GO" id="GO:0003688">
    <property type="term" value="F:DNA replication origin binding"/>
    <property type="evidence" value="ECO:0007669"/>
    <property type="project" value="UniProtKB-UniRule"/>
</dbReference>
<dbReference type="GO" id="GO:0008289">
    <property type="term" value="F:lipid binding"/>
    <property type="evidence" value="ECO:0007669"/>
    <property type="project" value="UniProtKB-KW"/>
</dbReference>
<dbReference type="GO" id="GO:0006270">
    <property type="term" value="P:DNA replication initiation"/>
    <property type="evidence" value="ECO:0007669"/>
    <property type="project" value="UniProtKB-UniRule"/>
</dbReference>
<dbReference type="GO" id="GO:0006275">
    <property type="term" value="P:regulation of DNA replication"/>
    <property type="evidence" value="ECO:0007669"/>
    <property type="project" value="UniProtKB-UniRule"/>
</dbReference>
<dbReference type="CDD" id="cd00009">
    <property type="entry name" value="AAA"/>
    <property type="match status" value="1"/>
</dbReference>
<dbReference type="CDD" id="cd06571">
    <property type="entry name" value="Bac_DnaA_C"/>
    <property type="match status" value="1"/>
</dbReference>
<dbReference type="Gene3D" id="1.10.1750.10">
    <property type="match status" value="1"/>
</dbReference>
<dbReference type="Gene3D" id="1.10.8.60">
    <property type="match status" value="1"/>
</dbReference>
<dbReference type="Gene3D" id="3.30.300.180">
    <property type="match status" value="1"/>
</dbReference>
<dbReference type="Gene3D" id="3.40.50.300">
    <property type="entry name" value="P-loop containing nucleotide triphosphate hydrolases"/>
    <property type="match status" value="1"/>
</dbReference>
<dbReference type="HAMAP" id="MF_00377">
    <property type="entry name" value="DnaA_bact"/>
    <property type="match status" value="1"/>
</dbReference>
<dbReference type="InterPro" id="IPR003593">
    <property type="entry name" value="AAA+_ATPase"/>
</dbReference>
<dbReference type="InterPro" id="IPR001957">
    <property type="entry name" value="Chromosome_initiator_DnaA"/>
</dbReference>
<dbReference type="InterPro" id="IPR020591">
    <property type="entry name" value="Chromosome_initiator_DnaA-like"/>
</dbReference>
<dbReference type="InterPro" id="IPR018312">
    <property type="entry name" value="Chromosome_initiator_DnaA_CS"/>
</dbReference>
<dbReference type="InterPro" id="IPR013159">
    <property type="entry name" value="DnaA_C"/>
</dbReference>
<dbReference type="InterPro" id="IPR013317">
    <property type="entry name" value="DnaA_dom"/>
</dbReference>
<dbReference type="InterPro" id="IPR024633">
    <property type="entry name" value="DnaA_N_dom"/>
</dbReference>
<dbReference type="InterPro" id="IPR038454">
    <property type="entry name" value="DnaA_N_sf"/>
</dbReference>
<dbReference type="InterPro" id="IPR027417">
    <property type="entry name" value="P-loop_NTPase"/>
</dbReference>
<dbReference type="InterPro" id="IPR010921">
    <property type="entry name" value="Trp_repressor/repl_initiator"/>
</dbReference>
<dbReference type="NCBIfam" id="TIGR00362">
    <property type="entry name" value="DnaA"/>
    <property type="match status" value="1"/>
</dbReference>
<dbReference type="PANTHER" id="PTHR30050">
    <property type="entry name" value="CHROMOSOMAL REPLICATION INITIATOR PROTEIN DNAA"/>
    <property type="match status" value="1"/>
</dbReference>
<dbReference type="PANTHER" id="PTHR30050:SF2">
    <property type="entry name" value="CHROMOSOMAL REPLICATION INITIATOR PROTEIN DNAA"/>
    <property type="match status" value="1"/>
</dbReference>
<dbReference type="Pfam" id="PF00308">
    <property type="entry name" value="Bac_DnaA"/>
    <property type="match status" value="1"/>
</dbReference>
<dbReference type="Pfam" id="PF08299">
    <property type="entry name" value="Bac_DnaA_C"/>
    <property type="match status" value="1"/>
</dbReference>
<dbReference type="Pfam" id="PF11638">
    <property type="entry name" value="DnaA_N"/>
    <property type="match status" value="1"/>
</dbReference>
<dbReference type="PRINTS" id="PR00051">
    <property type="entry name" value="DNAA"/>
</dbReference>
<dbReference type="SMART" id="SM00382">
    <property type="entry name" value="AAA"/>
    <property type="match status" value="1"/>
</dbReference>
<dbReference type="SMART" id="SM00760">
    <property type="entry name" value="Bac_DnaA_C"/>
    <property type="match status" value="1"/>
</dbReference>
<dbReference type="SUPFAM" id="SSF52540">
    <property type="entry name" value="P-loop containing nucleoside triphosphate hydrolases"/>
    <property type="match status" value="1"/>
</dbReference>
<dbReference type="SUPFAM" id="SSF48295">
    <property type="entry name" value="TrpR-like"/>
    <property type="match status" value="1"/>
</dbReference>
<dbReference type="PROSITE" id="PS01008">
    <property type="entry name" value="DNAA"/>
    <property type="match status" value="1"/>
</dbReference>
<protein>
    <recommendedName>
        <fullName evidence="1">Chromosomal replication initiator protein DnaA</fullName>
    </recommendedName>
</protein>
<proteinExistence type="inferred from homology"/>
<sequence length="440" mass="49688">MNPSQILENLKKELSENEYENYLSNLKFNEKQSKADLLVFNAPNELMAKFIQTKYGKKIAHFYEVQSGNKAIINIQAQSAKQSNKSTKIDIAHIKAQSTILNPSFTFDSFVVGDSNKYAYGACKAITHKDKLGKLYNPIFVYGPTGLGKTHLLQAVGNASLEMGKKVIYATSENFINDFTSNLKNGSLDKFHEKYRNCDVLLIDDVQFLGKTDKIQEEFFFIFNEIKNNDGQIIMTSDNPPNMLKGITERLKSRFAHGIIADITPPQLDTKIAIIRKKCEFNDINLSNDIINYIATSLGDNIREIEGIIISLNAYATILGQEITLELAKSVMKDHIKEKKENITIDDILSLVCKEFNIKPSDVKSNKKTQNIVTARRIVIYLARALTALTMPQLANYFEMKDHTAISHNVKKITEMIENDGSLKAKIEELKNKILVKSQS</sequence>
<gene>
    <name evidence="1" type="primary">dnaA</name>
    <name type="ordered locus">CJE0001</name>
</gene>
<name>DNAA_CAMJR</name>